<feature type="chain" id="PRO_0000278197" description="Glutamyl aminopeptidase">
    <location>
        <begin position="1"/>
        <end position="956"/>
    </location>
</feature>
<feature type="topological domain" description="Cytoplasmic" evidence="2">
    <location>
        <begin position="1"/>
        <end position="21"/>
    </location>
</feature>
<feature type="transmembrane region" description="Helical; Signal-anchor for type II membrane protein" evidence="2">
    <location>
        <begin position="22"/>
        <end position="42"/>
    </location>
</feature>
<feature type="topological domain" description="Extracellular" evidence="2">
    <location>
        <begin position="43"/>
        <end position="956"/>
    </location>
</feature>
<feature type="region of interest" description="Disordered" evidence="4">
    <location>
        <begin position="48"/>
        <end position="87"/>
    </location>
</feature>
<feature type="compositionally biased region" description="Low complexity" evidence="4">
    <location>
        <begin position="49"/>
        <end position="62"/>
    </location>
</feature>
<feature type="active site" description="Proton acceptor" evidence="3">
    <location>
        <position position="396"/>
    </location>
</feature>
<feature type="binding site" evidence="1">
    <location>
        <position position="225"/>
    </location>
    <ligand>
        <name>substrate</name>
    </ligand>
</feature>
<feature type="binding site" evidence="1">
    <location>
        <begin position="359"/>
        <end position="363"/>
    </location>
    <ligand>
        <name>substrate</name>
    </ligand>
</feature>
<feature type="binding site" evidence="3">
    <location>
        <position position="395"/>
    </location>
    <ligand>
        <name>Zn(2+)</name>
        <dbReference type="ChEBI" id="CHEBI:29105"/>
        <note>catalytic</note>
    </ligand>
</feature>
<feature type="binding site" evidence="3">
    <location>
        <position position="399"/>
    </location>
    <ligand>
        <name>Zn(2+)</name>
        <dbReference type="ChEBI" id="CHEBI:29105"/>
        <note>catalytic</note>
    </ligand>
</feature>
<feature type="binding site" evidence="3">
    <location>
        <position position="418"/>
    </location>
    <ligand>
        <name>Zn(2+)</name>
        <dbReference type="ChEBI" id="CHEBI:29105"/>
        <note>catalytic</note>
    </ligand>
</feature>
<feature type="binding site" evidence="1">
    <location>
        <position position="888"/>
    </location>
    <ligand>
        <name>substrate</name>
    </ligand>
</feature>
<feature type="site" description="Binds calcium which modulates its enzyme activity" evidence="1">
    <location>
        <position position="223"/>
    </location>
</feature>
<feature type="site" description="Transition state stabilizer" evidence="1">
    <location>
        <position position="481"/>
    </location>
</feature>
<feature type="glycosylation site" description="N-linked (GlcNAc...) asparagine" evidence="2">
    <location>
        <position position="126"/>
    </location>
</feature>
<feature type="glycosylation site" description="N-linked (GlcNAc...) asparagine" evidence="2">
    <location>
        <position position="199"/>
    </location>
</feature>
<feature type="glycosylation site" description="N-linked (GlcNAc...) asparagine" evidence="2">
    <location>
        <position position="326"/>
    </location>
</feature>
<feature type="glycosylation site" description="N-linked (GlcNAc...) asparagine" evidence="2">
    <location>
        <position position="556"/>
    </location>
</feature>
<feature type="glycosylation site" description="N-linked (GlcNAc...) asparagine" evidence="2">
    <location>
        <position position="569"/>
    </location>
</feature>
<feature type="glycosylation site" description="N-linked (GlcNAc...) asparagine" evidence="2">
    <location>
        <position position="599"/>
    </location>
</feature>
<feature type="glycosylation site" description="N-linked (GlcNAc...) asparagine" evidence="2">
    <location>
        <position position="643"/>
    </location>
</feature>
<feature type="glycosylation site" description="N-linked (GlcNAc...) asparagine" evidence="2">
    <location>
        <position position="647"/>
    </location>
</feature>
<feature type="glycosylation site" description="N-linked (GlcNAc...) asparagine" evidence="2">
    <location>
        <position position="679"/>
    </location>
</feature>
<feature type="glycosylation site" description="N-linked (GlcNAc...) asparagine" evidence="2">
    <location>
        <position position="764"/>
    </location>
</feature>
<feature type="glycosylation site" description="N-linked (GlcNAc...) asparagine" evidence="2">
    <location>
        <position position="797"/>
    </location>
</feature>
<feature type="glycosylation site" description="N-linked (GlcNAc...) asparagine" evidence="2">
    <location>
        <position position="802"/>
    </location>
</feature>
<feature type="glycosylation site" description="N-linked (GlcNAc...) asparagine" evidence="2">
    <location>
        <position position="829"/>
    </location>
</feature>
<comment type="function">
    <text evidence="1">Regulates central hypertension through its calcium-modulated preference to cleave N-terminal acidic residues from peptides such as angiotensin II.</text>
</comment>
<comment type="catalytic activity">
    <reaction evidence="1">
        <text>Release of N-terminal glutamate (and to a lesser extent aspartate) from a peptide.</text>
        <dbReference type="EC" id="3.4.11.7"/>
    </reaction>
</comment>
<comment type="cofactor">
    <cofactor evidence="1">
        <name>Zn(2+)</name>
        <dbReference type="ChEBI" id="CHEBI:29105"/>
    </cofactor>
    <text evidence="1">Binds 1 zinc ion per subunit.</text>
</comment>
<comment type="activity regulation">
    <text evidence="1">Substrate specificity is modulated by calcium which enhances the enzymatic activity for cleavage of acidic residues while reducing its activity with basic residues. Inhibited by aminopeptidase inhibitors amastatin and bestatin.</text>
</comment>
<comment type="subunit">
    <text evidence="1">Homodimer; disulfide-linked.</text>
</comment>
<comment type="subcellular location">
    <subcellularLocation>
        <location evidence="1">Cell membrane</location>
        <topology>Single-pass type II membrane protein</topology>
    </subcellularLocation>
</comment>
<comment type="similarity">
    <text evidence="5">Belongs to the peptidase M1 family.</text>
</comment>
<proteinExistence type="evidence at transcript level"/>
<organism>
    <name type="scientific">Bos taurus</name>
    <name type="common">Bovine</name>
    <dbReference type="NCBI Taxonomy" id="9913"/>
    <lineage>
        <taxon>Eukaryota</taxon>
        <taxon>Metazoa</taxon>
        <taxon>Chordata</taxon>
        <taxon>Craniata</taxon>
        <taxon>Vertebrata</taxon>
        <taxon>Euteleostomi</taxon>
        <taxon>Mammalia</taxon>
        <taxon>Eutheria</taxon>
        <taxon>Laurasiatheria</taxon>
        <taxon>Artiodactyla</taxon>
        <taxon>Ruminantia</taxon>
        <taxon>Pecora</taxon>
        <taxon>Bovidae</taxon>
        <taxon>Bovinae</taxon>
        <taxon>Bos</taxon>
    </lineage>
</organism>
<name>AMPE_BOVIN</name>
<protein>
    <recommendedName>
        <fullName>Glutamyl aminopeptidase</fullName>
        <shortName>EAP</shortName>
        <ecNumber>3.4.11.7</ecNumber>
    </recommendedName>
    <alternativeName>
        <fullName>Aminopeptidase A</fullName>
        <shortName>AP-A</shortName>
    </alternativeName>
    <cdAntigenName>CD249</cdAntigenName>
</protein>
<gene>
    <name type="primary">ENPEP</name>
</gene>
<keyword id="KW-0031">Aminopeptidase</keyword>
<keyword id="KW-0106">Calcium</keyword>
<keyword id="KW-1003">Cell membrane</keyword>
<keyword id="KW-1015">Disulfide bond</keyword>
<keyword id="KW-0325">Glycoprotein</keyword>
<keyword id="KW-0378">Hydrolase</keyword>
<keyword id="KW-0472">Membrane</keyword>
<keyword id="KW-0479">Metal-binding</keyword>
<keyword id="KW-0482">Metalloprotease</keyword>
<keyword id="KW-0645">Protease</keyword>
<keyword id="KW-1185">Reference proteome</keyword>
<keyword id="KW-0735">Signal-anchor</keyword>
<keyword id="KW-0812">Transmembrane</keyword>
<keyword id="KW-1133">Transmembrane helix</keyword>
<keyword id="KW-0862">Zinc</keyword>
<evidence type="ECO:0000250" key="1">
    <source>
        <dbReference type="UniProtKB" id="Q07075"/>
    </source>
</evidence>
<evidence type="ECO:0000255" key="2"/>
<evidence type="ECO:0000255" key="3">
    <source>
        <dbReference type="PROSITE-ProRule" id="PRU10095"/>
    </source>
</evidence>
<evidence type="ECO:0000256" key="4">
    <source>
        <dbReference type="SAM" id="MobiDB-lite"/>
    </source>
</evidence>
<evidence type="ECO:0000305" key="5"/>
<accession>Q32LQ0</accession>
<sequence length="956" mass="109801">MILEERSSWEGSKRYCIKTKHVAIICAVVVAVGLIVGLSVGLTRSCDSTEGMTQGTTQGTTQAPSHLPPVTSPPEDQGVCPASEDESGGWKDFRLPDFIKPVHYDLEVKPLMEQDTYTGSVDISINVSSSTRYLWLHLRETRITRLPVLRRPSGEQVQVRQCFEYKKQEYVVVEAEEELEPNTGEGPYHLILEFAGWLNGSLVGFYRTTYVEKGQTKSIAATDHEPTDARKSFPCFDEPNKKATYTISIVHSKEYKALSNMPVEKEESVDDIWSRTTFQKSVPMSTYLVCFAVHQFDSVTRISNRGIPLTIYVQPEQKHTAEYAANITKSVFDYFEDYFGMSYSLPKLDKIAIPDFGTGAMENWGLITYRETNLLYDPDESASSNKQRVAAVIAHELVHQWFGNIVTMEWWDDLWLNEGFASFFEYLGVAYAEKDWQMRDQMILDDVLPVQEDDSLMSSHPIVVTVATPDEITSVFDGISYSKGASILRMLENWITREKFQIGCQNYLKKHKFENAKTSDFWAALEEASNLPVKEVMDTWTNQMGYPVLNVDNMKNITQKRFLLDPRANASEPHSAFGYTWNIPIKWTEDDEQRITLYNRSETGGITLESTLSGNAFLKINPDHIGFYRVNYEVSTWEWIATNLSVNHTDFSSADRASFIDDAFALARAQLLNYKEALNLTKYLKEEKEYLPWHRVISAVTYIISMFEDDKELYPVIEKYFRDQVKPIADSLGWNDVGDHLTKLLRASVLGLACKMGDSDALNNASQLFQEWLTGTVSLPVNLRLLVYRYGMQNSGNETSWNYTLEQYQKTSLAQEKEKLLYGLASVKNVTLLSRYLDLLKDSNLIKTQDVFTVIQYISYNSYGKTMAWNWIQLNWEYLVNRYTLNNRNLGRIVTIAEPFNTELQLWQIKSFFERYPEAGAGQKPREQVLETVKNNIEWLKQNRDTIRNWFLDLNG</sequence>
<reference key="1">
    <citation type="submission" date="2005-11" db="EMBL/GenBank/DDBJ databases">
        <authorList>
            <consortium name="NIH - Mammalian Gene Collection (MGC) project"/>
        </authorList>
    </citation>
    <scope>NUCLEOTIDE SEQUENCE [LARGE SCALE MRNA]</scope>
    <source>
        <strain>Crossbred X Angus</strain>
        <tissue>Ileum</tissue>
    </source>
</reference>
<dbReference type="EC" id="3.4.11.7"/>
<dbReference type="EMBL" id="BC109476">
    <property type="protein sequence ID" value="AAI09477.1"/>
    <property type="molecule type" value="mRNA"/>
</dbReference>
<dbReference type="RefSeq" id="NP_001033116.1">
    <property type="nucleotide sequence ID" value="NM_001038027.1"/>
</dbReference>
<dbReference type="SMR" id="Q32LQ0"/>
<dbReference type="FunCoup" id="Q32LQ0">
    <property type="interactions" value="125"/>
</dbReference>
<dbReference type="STRING" id="9913.ENSBTAP00000010972"/>
<dbReference type="MEROPS" id="M01.003"/>
<dbReference type="GlyCosmos" id="Q32LQ0">
    <property type="glycosylation" value="13 sites, No reported glycans"/>
</dbReference>
<dbReference type="GlyGen" id="Q32LQ0">
    <property type="glycosylation" value="13 sites"/>
</dbReference>
<dbReference type="PaxDb" id="9913-ENSBTAP00000010972"/>
<dbReference type="GeneID" id="504350"/>
<dbReference type="KEGG" id="bta:504350"/>
<dbReference type="CTD" id="2028"/>
<dbReference type="eggNOG" id="KOG1046">
    <property type="taxonomic scope" value="Eukaryota"/>
</dbReference>
<dbReference type="InParanoid" id="Q32LQ0"/>
<dbReference type="OrthoDB" id="510539at2759"/>
<dbReference type="Proteomes" id="UP000009136">
    <property type="component" value="Unplaced"/>
</dbReference>
<dbReference type="GO" id="GO:0005737">
    <property type="term" value="C:cytoplasm"/>
    <property type="evidence" value="ECO:0000318"/>
    <property type="project" value="GO_Central"/>
</dbReference>
<dbReference type="GO" id="GO:0005615">
    <property type="term" value="C:extracellular space"/>
    <property type="evidence" value="ECO:0000318"/>
    <property type="project" value="GO_Central"/>
</dbReference>
<dbReference type="GO" id="GO:0005886">
    <property type="term" value="C:plasma membrane"/>
    <property type="evidence" value="ECO:0000250"/>
    <property type="project" value="UniProtKB"/>
</dbReference>
<dbReference type="GO" id="GO:0004177">
    <property type="term" value="F:aminopeptidase activity"/>
    <property type="evidence" value="ECO:0000250"/>
    <property type="project" value="UniProtKB"/>
</dbReference>
<dbReference type="GO" id="GO:0004230">
    <property type="term" value="F:glutamyl aminopeptidase activity"/>
    <property type="evidence" value="ECO:0007669"/>
    <property type="project" value="UniProtKB-EC"/>
</dbReference>
<dbReference type="GO" id="GO:0070006">
    <property type="term" value="F:metalloaminopeptidase activity"/>
    <property type="evidence" value="ECO:0000250"/>
    <property type="project" value="UniProtKB"/>
</dbReference>
<dbReference type="GO" id="GO:0042277">
    <property type="term" value="F:peptide binding"/>
    <property type="evidence" value="ECO:0000318"/>
    <property type="project" value="GO_Central"/>
</dbReference>
<dbReference type="GO" id="GO:0008270">
    <property type="term" value="F:zinc ion binding"/>
    <property type="evidence" value="ECO:0000318"/>
    <property type="project" value="GO_Central"/>
</dbReference>
<dbReference type="GO" id="GO:0016477">
    <property type="term" value="P:cell migration"/>
    <property type="evidence" value="ECO:0000250"/>
    <property type="project" value="UniProtKB"/>
</dbReference>
<dbReference type="GO" id="GO:0008283">
    <property type="term" value="P:cell population proliferation"/>
    <property type="evidence" value="ECO:0000250"/>
    <property type="project" value="UniProtKB"/>
</dbReference>
<dbReference type="GO" id="GO:0043171">
    <property type="term" value="P:peptide catabolic process"/>
    <property type="evidence" value="ECO:0000318"/>
    <property type="project" value="GO_Central"/>
</dbReference>
<dbReference type="GO" id="GO:0006508">
    <property type="term" value="P:proteolysis"/>
    <property type="evidence" value="ECO:0000318"/>
    <property type="project" value="GO_Central"/>
</dbReference>
<dbReference type="GO" id="GO:0008217">
    <property type="term" value="P:regulation of blood pressure"/>
    <property type="evidence" value="ECO:0000318"/>
    <property type="project" value="GO_Central"/>
</dbReference>
<dbReference type="GO" id="GO:0003081">
    <property type="term" value="P:regulation of systemic arterial blood pressure by renin-angiotensin"/>
    <property type="evidence" value="ECO:0000250"/>
    <property type="project" value="UniProtKB"/>
</dbReference>
<dbReference type="CDD" id="cd09601">
    <property type="entry name" value="M1_APN-Q_like"/>
    <property type="match status" value="1"/>
</dbReference>
<dbReference type="FunFam" id="1.25.50.20:FF:000001">
    <property type="entry name" value="Aminopeptidase"/>
    <property type="match status" value="1"/>
</dbReference>
<dbReference type="FunFam" id="2.60.40.1730:FF:000006">
    <property type="entry name" value="Aminopeptidase"/>
    <property type="match status" value="1"/>
</dbReference>
<dbReference type="FunFam" id="2.60.40.1910:FF:000003">
    <property type="entry name" value="Aminopeptidase"/>
    <property type="match status" value="1"/>
</dbReference>
<dbReference type="FunFam" id="1.10.390.10:FF:000016">
    <property type="entry name" value="Glutamyl aminopeptidase"/>
    <property type="match status" value="1"/>
</dbReference>
<dbReference type="Gene3D" id="1.25.50.20">
    <property type="match status" value="1"/>
</dbReference>
<dbReference type="Gene3D" id="2.60.40.1910">
    <property type="match status" value="1"/>
</dbReference>
<dbReference type="Gene3D" id="1.10.390.10">
    <property type="entry name" value="Neutral Protease Domain 2"/>
    <property type="match status" value="1"/>
</dbReference>
<dbReference type="Gene3D" id="2.60.40.1730">
    <property type="entry name" value="tricorn interacting facor f3 domain"/>
    <property type="match status" value="1"/>
</dbReference>
<dbReference type="InterPro" id="IPR045357">
    <property type="entry name" value="Aminopeptidase_N-like_N"/>
</dbReference>
<dbReference type="InterPro" id="IPR042097">
    <property type="entry name" value="Aminopeptidase_N-like_N_sf"/>
</dbReference>
<dbReference type="InterPro" id="IPR024571">
    <property type="entry name" value="ERAP1-like_C_dom"/>
</dbReference>
<dbReference type="InterPro" id="IPR034016">
    <property type="entry name" value="M1_APN-typ"/>
</dbReference>
<dbReference type="InterPro" id="IPR001930">
    <property type="entry name" value="Peptidase_M1"/>
</dbReference>
<dbReference type="InterPro" id="IPR050344">
    <property type="entry name" value="Peptidase_M1_aminopeptidases"/>
</dbReference>
<dbReference type="InterPro" id="IPR014782">
    <property type="entry name" value="Peptidase_M1_dom"/>
</dbReference>
<dbReference type="InterPro" id="IPR027268">
    <property type="entry name" value="Peptidase_M4/M1_CTD_sf"/>
</dbReference>
<dbReference type="PANTHER" id="PTHR11533:SF276">
    <property type="entry name" value="GLUTAMYL AMINOPEPTIDASE"/>
    <property type="match status" value="1"/>
</dbReference>
<dbReference type="PANTHER" id="PTHR11533">
    <property type="entry name" value="PROTEASE M1 ZINC METALLOPROTEASE"/>
    <property type="match status" value="1"/>
</dbReference>
<dbReference type="Pfam" id="PF11838">
    <property type="entry name" value="ERAP1_C"/>
    <property type="match status" value="1"/>
</dbReference>
<dbReference type="Pfam" id="PF01433">
    <property type="entry name" value="Peptidase_M1"/>
    <property type="match status" value="1"/>
</dbReference>
<dbReference type="Pfam" id="PF17900">
    <property type="entry name" value="Peptidase_M1_N"/>
    <property type="match status" value="1"/>
</dbReference>
<dbReference type="PRINTS" id="PR00756">
    <property type="entry name" value="ALADIPTASE"/>
</dbReference>
<dbReference type="SUPFAM" id="SSF63737">
    <property type="entry name" value="Leukotriene A4 hydrolase N-terminal domain"/>
    <property type="match status" value="1"/>
</dbReference>
<dbReference type="SUPFAM" id="SSF55486">
    <property type="entry name" value="Metalloproteases ('zincins'), catalytic domain"/>
    <property type="match status" value="1"/>
</dbReference>
<dbReference type="PROSITE" id="PS00142">
    <property type="entry name" value="ZINC_PROTEASE"/>
    <property type="match status" value="1"/>
</dbReference>